<gene>
    <name type="primary">GH3.12</name>
    <name type="synonym">GDG1</name>
    <name type="synonym">PBS3</name>
    <name type="synonym">WIN3</name>
    <name type="ordered locus">At5g13320</name>
    <name type="ORF">T22N19.5</name>
    <name type="ORF">T31B5.140</name>
</gene>
<sequence>MKPIFDINETFEKQLKDLTSNVKSIQDNLLEEIITPNTKTEYLQRFLIDRFDKELFKKNVPIVSYEDIKPYLDRVVNGESSDVISARTITGFLLSSGTSGGAQKMMPWNNKYLDNLTFIYDLRMQVITKHVKGVEEGKGMMFLFTKQESMTPSGLPARVATSSYFKSDYFKNRPSNWYYSYTSPDEVILCPNNTESLYCHLLCGLVQRDEVVRTGSIFASVMVRAIEVLKNSWEELCSNIRSGHLSNWVTDLGCQNSVSLVLGGPRPELADTIEEICNQNSWKGIVKRLWPNTKYIETVVTGSMGQYVPMLNYYCNDLPLVSTTYGSSETTFGINLDPLCKPEDVSYTFMPNMSYFEFIPMDGGDKNDVVDLEDVKLGCTYEPVVTNFAGLYRMRVGDIVLVTGFYNNAPQFKFVRRENVVLSIDSDKTNEEDLFKAVSQAKLVLESSGLDLKDFTSYADTSTFPGHYVVYLEVDTKEGEEKETAQFELDEEALSTCCLVMEESLDNVYKRCRFKDGSIGPLEIRVVRQGTFDSLMDFFISQGASTGQYKTPRCIKSGKALQVLETCVVAKFFSI</sequence>
<reference key="1">
    <citation type="journal article" date="2008" name="Plant J.">
        <title>Arabidopsis proteins important for modulating defense responses to Pseudomonas syringae that secrete HopW1-1.</title>
        <authorList>
            <person name="Lee M.W."/>
            <person name="Jelenska J."/>
            <person name="Greenberg J.T."/>
        </authorList>
    </citation>
    <scope>NUCLEOTIDE SEQUENCE [MRNA]</scope>
    <scope>FUNCTION</scope>
    <scope>INTERACTION WITH PSEUDOMONAS SYRINGAE MACULICOLA HOPW1-1</scope>
    <scope>INDUCTION BY PSEUDOMONAS SYRINGAE MACULICOLA</scope>
    <source>
        <strain>cv. Wassilewskija</strain>
    </source>
</reference>
<reference key="2">
    <citation type="journal article" date="2000" name="Nature">
        <title>Sequence and analysis of chromosome 5 of the plant Arabidopsis thaliana.</title>
        <authorList>
            <person name="Tabata S."/>
            <person name="Kaneko T."/>
            <person name="Nakamura Y."/>
            <person name="Kotani H."/>
            <person name="Kato T."/>
            <person name="Asamizu E."/>
            <person name="Miyajima N."/>
            <person name="Sasamoto S."/>
            <person name="Kimura T."/>
            <person name="Hosouchi T."/>
            <person name="Kawashima K."/>
            <person name="Kohara M."/>
            <person name="Matsumoto M."/>
            <person name="Matsuno A."/>
            <person name="Muraki A."/>
            <person name="Nakayama S."/>
            <person name="Nakazaki N."/>
            <person name="Naruo K."/>
            <person name="Okumura S."/>
            <person name="Shinpo S."/>
            <person name="Takeuchi C."/>
            <person name="Wada T."/>
            <person name="Watanabe A."/>
            <person name="Yamada M."/>
            <person name="Yasuda M."/>
            <person name="Sato S."/>
            <person name="de la Bastide M."/>
            <person name="Huang E."/>
            <person name="Spiegel L."/>
            <person name="Gnoj L."/>
            <person name="O'Shaughnessy A."/>
            <person name="Preston R."/>
            <person name="Habermann K."/>
            <person name="Murray J."/>
            <person name="Johnson D."/>
            <person name="Rohlfing T."/>
            <person name="Nelson J."/>
            <person name="Stoneking T."/>
            <person name="Pepin K."/>
            <person name="Spieth J."/>
            <person name="Sekhon M."/>
            <person name="Armstrong J."/>
            <person name="Becker M."/>
            <person name="Belter E."/>
            <person name="Cordum H."/>
            <person name="Cordes M."/>
            <person name="Courtney L."/>
            <person name="Courtney W."/>
            <person name="Dante M."/>
            <person name="Du H."/>
            <person name="Edwards J."/>
            <person name="Fryman J."/>
            <person name="Haakensen B."/>
            <person name="Lamar E."/>
            <person name="Latreille P."/>
            <person name="Leonard S."/>
            <person name="Meyer R."/>
            <person name="Mulvaney E."/>
            <person name="Ozersky P."/>
            <person name="Riley A."/>
            <person name="Strowmatt C."/>
            <person name="Wagner-McPherson C."/>
            <person name="Wollam A."/>
            <person name="Yoakum M."/>
            <person name="Bell M."/>
            <person name="Dedhia N."/>
            <person name="Parnell L."/>
            <person name="Shah R."/>
            <person name="Rodriguez M."/>
            <person name="Hoon See L."/>
            <person name="Vil D."/>
            <person name="Baker J."/>
            <person name="Kirchoff K."/>
            <person name="Toth K."/>
            <person name="King L."/>
            <person name="Bahret A."/>
            <person name="Miller B."/>
            <person name="Marra M.A."/>
            <person name="Martienssen R."/>
            <person name="McCombie W.R."/>
            <person name="Wilson R.K."/>
            <person name="Murphy G."/>
            <person name="Bancroft I."/>
            <person name="Volckaert G."/>
            <person name="Wambutt R."/>
            <person name="Duesterhoeft A."/>
            <person name="Stiekema W."/>
            <person name="Pohl T."/>
            <person name="Entian K.-D."/>
            <person name="Terryn N."/>
            <person name="Hartley N."/>
            <person name="Bent E."/>
            <person name="Johnson S."/>
            <person name="Langham S.-A."/>
            <person name="McCullagh B."/>
            <person name="Robben J."/>
            <person name="Grymonprez B."/>
            <person name="Zimmermann W."/>
            <person name="Ramsperger U."/>
            <person name="Wedler H."/>
            <person name="Balke K."/>
            <person name="Wedler E."/>
            <person name="Peters S."/>
            <person name="van Staveren M."/>
            <person name="Dirkse W."/>
            <person name="Mooijman P."/>
            <person name="Klein Lankhorst R."/>
            <person name="Weitzenegger T."/>
            <person name="Bothe G."/>
            <person name="Rose M."/>
            <person name="Hauf J."/>
            <person name="Berneiser S."/>
            <person name="Hempel S."/>
            <person name="Feldpausch M."/>
            <person name="Lamberth S."/>
            <person name="Villarroel R."/>
            <person name="Gielen J."/>
            <person name="Ardiles W."/>
            <person name="Bents O."/>
            <person name="Lemcke K."/>
            <person name="Kolesov G."/>
            <person name="Mayer K.F.X."/>
            <person name="Rudd S."/>
            <person name="Schoof H."/>
            <person name="Schueller C."/>
            <person name="Zaccaria P."/>
            <person name="Mewes H.-W."/>
            <person name="Bevan M."/>
            <person name="Fransz P.F."/>
        </authorList>
    </citation>
    <scope>NUCLEOTIDE SEQUENCE [LARGE SCALE GENOMIC DNA]</scope>
    <source>
        <strain>cv. Columbia</strain>
    </source>
</reference>
<reference key="3">
    <citation type="journal article" date="2017" name="Plant J.">
        <title>Araport11: a complete reannotation of the Arabidopsis thaliana reference genome.</title>
        <authorList>
            <person name="Cheng C.Y."/>
            <person name="Krishnakumar V."/>
            <person name="Chan A.P."/>
            <person name="Thibaud-Nissen F."/>
            <person name="Schobel S."/>
            <person name="Town C.D."/>
        </authorList>
    </citation>
    <scope>GENOME REANNOTATION</scope>
    <source>
        <strain>cv. Columbia</strain>
    </source>
</reference>
<reference key="4">
    <citation type="journal article" date="1999" name="Genetics">
        <title>Identification of three putative signal transduction genes involved in R gene-specified disease resistance in Arabidopsis.</title>
        <authorList>
            <person name="Warren R.F."/>
            <person name="Merritt P.M."/>
            <person name="Holub E."/>
            <person name="Innes R.W."/>
        </authorList>
    </citation>
    <scope>FUNCTION</scope>
    <scope>DISRUPTION PHENOTYPE</scope>
    <source>
        <strain>cv. Columbia</strain>
    </source>
</reference>
<reference key="5">
    <citation type="journal article" date="2002" name="Plant J.">
        <title>Arabidopsis RPP4 is a member of the RPP5 multigene family of TIR-NB-LRR genes and confers downy mildew resistance through multiple signalling components.</title>
        <authorList>
            <person name="van der Biezen E.A."/>
            <person name="Freddie C.T."/>
            <person name="Kahn K."/>
            <person name="Parker J.E."/>
            <person name="Jones J.D."/>
        </authorList>
    </citation>
    <scope>FUNCTION</scope>
</reference>
<reference key="6">
    <citation type="journal article" date="2005" name="Mol. Plant Microbe Interact.">
        <title>Genetic analysis of developmentally regulated resistance to downy mildew (Hyaloperonospora parasitica) in Arabidopsis thaliana.</title>
        <authorList>
            <person name="McDowell J.M."/>
            <person name="Williams S.G."/>
            <person name="Funderburg N.T."/>
            <person name="Eulgem T."/>
            <person name="Dangl J.L."/>
        </authorList>
    </citation>
    <scope>FUNCTION</scope>
</reference>
<reference key="7">
    <citation type="journal article" date="2007" name="Mol. Plant Microbe Interact.">
        <title>A key role for the Arabidopsis WIN3 protein in disease resistance triggered by Pseudomonas syringae that secrete AvrRpt2.</title>
        <authorList>
            <person name="Lee M.W."/>
            <person name="Lu H."/>
            <person name="Jung H.W."/>
            <person name="Greenberg J.T."/>
        </authorList>
    </citation>
    <scope>FUNCTION</scope>
    <scope>DISRUPTION PHENOTYPE</scope>
    <scope>INDUCTION BY PSEUDOMONAS SYRINGAE TOMATO</scope>
    <scope>INDUCTION BY PAD4 AND SALICYLIC ACID</scope>
</reference>
<reference key="8">
    <citation type="journal article" date="2007" name="Plant J.">
        <title>Arabidopsis GH3-LIKE DEFENSE GENE 1 is required for accumulation of salicylic acid, activation of defense responses and resistance to Pseudomonas syringae.</title>
        <authorList>
            <person name="Jagadeeswaran G."/>
            <person name="Raina S."/>
            <person name="Acharya B.R."/>
            <person name="Maqbool S.B."/>
            <person name="Mosher S.L."/>
            <person name="Appel H.M."/>
            <person name="Schultz J.C."/>
            <person name="Klessig D.F."/>
            <person name="Raina R."/>
        </authorList>
    </citation>
    <scope>FUNCTION</scope>
    <scope>DISRUPTION PHENOTYPE</scope>
    <scope>INDUCTION BY PSEUDOMONAS SYRINGAE TOMATO</scope>
    <scope>TISSUE SPECIFICITY</scope>
    <scope>DEVELOPMENTAL STAGE</scope>
</reference>
<reference key="9">
    <citation type="journal article" date="2007" name="Plant Physiol.">
        <title>The GH3 acyl adenylase family member PBS3 regulates salicylic acid-dependent defense responses in Arabidopsis.</title>
        <authorList>
            <person name="Nobuta K."/>
            <person name="Okrent R.A."/>
            <person name="Stoutemyer M."/>
            <person name="Rodibaugh N."/>
            <person name="Kempema L."/>
            <person name="Wildermuth M.C."/>
            <person name="Innes R.W."/>
        </authorList>
    </citation>
    <scope>FUNCTION</scope>
    <scope>DISRUPTION PHENOTYPE</scope>
    <scope>MUTAGENESIS OF GLU-502 AND ILE-519</scope>
    <scope>INDUCTION BY PSEUDOMONAS SYRINGAE TOMATO</scope>
    <source>
        <strain>cv. Columbia</strain>
        <strain>cv. No-0</strain>
    </source>
</reference>
<reference key="10">
    <citation type="journal article" date="2009" name="J. Biol. Chem.">
        <title>Arabidopsis GH3.12 (PBS3) conjugates amino acids to 4-substituted benzoates and is inhibited by salicylate.</title>
        <authorList>
            <person name="Okrent R.A."/>
            <person name="Brooks M.D."/>
            <person name="Wildermuth M.C."/>
        </authorList>
    </citation>
    <scope>FUNCTION</scope>
    <scope>BIOPHYSICOCHEMICAL PROPERTIES</scope>
    <scope>ACTIVITY REGULATION</scope>
    <scope>MUTAGENESIS OF GLU-502 AND ILE-519</scope>
    <source>
        <strain>cv. Columbia</strain>
    </source>
</reference>
<reference key="11">
    <citation type="journal article" date="2012" name="Science">
        <title>Structural basis for prereceptor modulation of plant hormones by GH3 proteins.</title>
        <authorList>
            <person name="Westfall C.S."/>
            <person name="Zubieta C."/>
            <person name="Herrmann J."/>
            <person name="Kapp U."/>
            <person name="Nanao M.H."/>
            <person name="Jez J.M."/>
        </authorList>
    </citation>
    <scope>X-RAY CRYSTALLOGRAPHY (1.80 ANGSTROMS) IN COMPLEX WITH AMP AND SALICYLIC ACID</scope>
</reference>
<keyword id="KW-0002">3D-structure</keyword>
<keyword id="KW-0175">Coiled coil</keyword>
<keyword id="KW-0381">Hypersensitive response</keyword>
<keyword id="KW-0436">Ligase</keyword>
<keyword id="KW-0611">Plant defense</keyword>
<keyword id="KW-1185">Reference proteome</keyword>
<dbReference type="EC" id="6.3.2.-"/>
<dbReference type="EMBL" id="EU214910">
    <property type="protein sequence ID" value="ABW84226.1"/>
    <property type="molecule type" value="mRNA"/>
</dbReference>
<dbReference type="EMBL" id="AL163491">
    <property type="protein sequence ID" value="CAB86639.1"/>
    <property type="molecule type" value="Genomic_DNA"/>
</dbReference>
<dbReference type="EMBL" id="CP002688">
    <property type="protein sequence ID" value="AED91880.1"/>
    <property type="molecule type" value="Genomic_DNA"/>
</dbReference>
<dbReference type="EMBL" id="CP002688">
    <property type="protein sequence ID" value="ANM68312.1"/>
    <property type="molecule type" value="Genomic_DNA"/>
</dbReference>
<dbReference type="PIR" id="T48579">
    <property type="entry name" value="T48579"/>
</dbReference>
<dbReference type="RefSeq" id="NP_001330076.1">
    <property type="nucleotide sequence ID" value="NM_001343269.1"/>
</dbReference>
<dbReference type="RefSeq" id="NP_196836.1">
    <property type="nucleotide sequence ID" value="NM_121335.4"/>
</dbReference>
<dbReference type="PDB" id="4EPM">
    <property type="method" value="X-ray"/>
    <property type="resolution" value="2.10 A"/>
    <property type="chains" value="A=1-575"/>
</dbReference>
<dbReference type="PDB" id="4EQ4">
    <property type="method" value="X-ray"/>
    <property type="resolution" value="2.07 A"/>
    <property type="chains" value="A/B=1-575"/>
</dbReference>
<dbReference type="PDB" id="4EQL">
    <property type="method" value="X-ray"/>
    <property type="resolution" value="1.80 A"/>
    <property type="chains" value="A/B=1-575"/>
</dbReference>
<dbReference type="PDB" id="4EWV">
    <property type="method" value="X-ray"/>
    <property type="resolution" value="2.90 A"/>
    <property type="chains" value="A/B=1-575"/>
</dbReference>
<dbReference type="PDB" id="4L39">
    <property type="method" value="X-ray"/>
    <property type="resolution" value="2.81 A"/>
    <property type="chains" value="A/B=1-575"/>
</dbReference>
<dbReference type="PDB" id="6OMS">
    <property type="method" value="X-ray"/>
    <property type="resolution" value="1.94 A"/>
    <property type="chains" value="A/B=1-575"/>
</dbReference>
<dbReference type="PDBsum" id="4EPM"/>
<dbReference type="PDBsum" id="4EQ4"/>
<dbReference type="PDBsum" id="4EQL"/>
<dbReference type="PDBsum" id="4EWV"/>
<dbReference type="PDBsum" id="4L39"/>
<dbReference type="PDBsum" id="6OMS"/>
<dbReference type="SMR" id="Q9LYU4"/>
<dbReference type="FunCoup" id="Q9LYU4">
    <property type="interactions" value="1087"/>
</dbReference>
<dbReference type="STRING" id="3702.Q9LYU4"/>
<dbReference type="iPTMnet" id="Q9LYU4"/>
<dbReference type="PaxDb" id="3702-AT5G13320.1"/>
<dbReference type="ProteomicsDB" id="220747"/>
<dbReference type="EnsemblPlants" id="AT5G13320.1">
    <property type="protein sequence ID" value="AT5G13320.1"/>
    <property type="gene ID" value="AT5G13320"/>
</dbReference>
<dbReference type="EnsemblPlants" id="AT5G13320.3">
    <property type="protein sequence ID" value="AT5G13320.3"/>
    <property type="gene ID" value="AT5G13320"/>
</dbReference>
<dbReference type="GeneID" id="831173"/>
<dbReference type="Gramene" id="AT5G13320.1">
    <property type="protein sequence ID" value="AT5G13320.1"/>
    <property type="gene ID" value="AT5G13320"/>
</dbReference>
<dbReference type="Gramene" id="AT5G13320.3">
    <property type="protein sequence ID" value="AT5G13320.3"/>
    <property type="gene ID" value="AT5G13320"/>
</dbReference>
<dbReference type="KEGG" id="ath:AT5G13320"/>
<dbReference type="Araport" id="AT5G13320"/>
<dbReference type="TAIR" id="AT5G13320">
    <property type="gene designation" value="PBS3"/>
</dbReference>
<dbReference type="eggNOG" id="ENOG502QPMW">
    <property type="taxonomic scope" value="Eukaryota"/>
</dbReference>
<dbReference type="HOGENOM" id="CLU_016249_2_1_1"/>
<dbReference type="InParanoid" id="Q9LYU4"/>
<dbReference type="OMA" id="CPNNTQS"/>
<dbReference type="PhylomeDB" id="Q9LYU4"/>
<dbReference type="BioCyc" id="ARA:AT5G13320-MONOMER"/>
<dbReference type="BioCyc" id="MetaCyc:AT5G13320-MONOMER"/>
<dbReference type="EvolutionaryTrace" id="Q9LYU4"/>
<dbReference type="PRO" id="PR:Q9LYU4"/>
<dbReference type="Proteomes" id="UP000006548">
    <property type="component" value="Chromosome 5"/>
</dbReference>
<dbReference type="ExpressionAtlas" id="Q9LYU4">
    <property type="expression patterns" value="baseline and differential"/>
</dbReference>
<dbReference type="GO" id="GO:0052625">
    <property type="term" value="F:N-(4-aminobenzoyl)-L-glutamate synthetase activity"/>
    <property type="evidence" value="ECO:0000314"/>
    <property type="project" value="TAIR"/>
</dbReference>
<dbReference type="GO" id="GO:0052628">
    <property type="term" value="F:N-(4-hydroxybenzoyl)-L-glutamate synthetase activity"/>
    <property type="evidence" value="ECO:0000314"/>
    <property type="project" value="TAIR"/>
</dbReference>
<dbReference type="GO" id="GO:0052626">
    <property type="term" value="F:N-benzoyl-L-glutamate synthetase activity"/>
    <property type="evidence" value="ECO:0000314"/>
    <property type="project" value="TAIR"/>
</dbReference>
<dbReference type="GO" id="GO:0052627">
    <property type="term" value="F:N-vanillate-L-glutamate synthetase activity"/>
    <property type="evidence" value="ECO:0000314"/>
    <property type="project" value="TAIR"/>
</dbReference>
<dbReference type="GO" id="GO:0018874">
    <property type="term" value="P:benzoate metabolic process"/>
    <property type="evidence" value="ECO:0000314"/>
    <property type="project" value="TAIR"/>
</dbReference>
<dbReference type="GO" id="GO:0071456">
    <property type="term" value="P:cellular response to hypoxia"/>
    <property type="evidence" value="ECO:0000270"/>
    <property type="project" value="TAIR"/>
</dbReference>
<dbReference type="GO" id="GO:0006952">
    <property type="term" value="P:defense response"/>
    <property type="evidence" value="ECO:0000315"/>
    <property type="project" value="TAIR"/>
</dbReference>
<dbReference type="GO" id="GO:0042742">
    <property type="term" value="P:defense response to bacterium"/>
    <property type="evidence" value="ECO:0000315"/>
    <property type="project" value="TAIR"/>
</dbReference>
<dbReference type="GO" id="GO:0016046">
    <property type="term" value="P:detection of fungus"/>
    <property type="evidence" value="ECO:0000315"/>
    <property type="project" value="TAIR"/>
</dbReference>
<dbReference type="GO" id="GO:0009626">
    <property type="term" value="P:plant-type hypersensitive response"/>
    <property type="evidence" value="ECO:0007669"/>
    <property type="project" value="UniProtKB-KW"/>
</dbReference>
<dbReference type="GO" id="GO:0034052">
    <property type="term" value="P:positive regulation of plant-type hypersensitive response"/>
    <property type="evidence" value="ECO:0000315"/>
    <property type="project" value="UniProtKB"/>
</dbReference>
<dbReference type="GO" id="GO:0010112">
    <property type="term" value="P:regulation of systemic acquired resistance"/>
    <property type="evidence" value="ECO:0000315"/>
    <property type="project" value="UniProtKB"/>
</dbReference>
<dbReference type="GO" id="GO:0009863">
    <property type="term" value="P:salicylic acid mediated signaling pathway"/>
    <property type="evidence" value="ECO:0000270"/>
    <property type="project" value="TAIR"/>
</dbReference>
<dbReference type="InterPro" id="IPR004993">
    <property type="entry name" value="GH3"/>
</dbReference>
<dbReference type="InterPro" id="IPR055378">
    <property type="entry name" value="GH3_C"/>
</dbReference>
<dbReference type="InterPro" id="IPR055377">
    <property type="entry name" value="GH3_M"/>
</dbReference>
<dbReference type="PANTHER" id="PTHR31901:SF43">
    <property type="entry name" value="4-SUBSTITUTED BENZOATES-GLUTAMATE LIGASE GH3.12"/>
    <property type="match status" value="1"/>
</dbReference>
<dbReference type="PANTHER" id="PTHR31901">
    <property type="entry name" value="GH3 DOMAIN-CONTAINING PROTEIN"/>
    <property type="match status" value="1"/>
</dbReference>
<dbReference type="Pfam" id="PF03321">
    <property type="entry name" value="GH3"/>
    <property type="match status" value="1"/>
</dbReference>
<dbReference type="Pfam" id="PF23572">
    <property type="entry name" value="GH3_C"/>
    <property type="match status" value="1"/>
</dbReference>
<dbReference type="Pfam" id="PF23571">
    <property type="entry name" value="GH3_M"/>
    <property type="match status" value="1"/>
</dbReference>
<protein>
    <recommendedName>
        <fullName>4-substituted benzoates-glutamate ligase GH3.12</fullName>
        <ecNumber>6.3.2.-</ecNumber>
    </recommendedName>
    <alternativeName>
        <fullName>Auxin-responsive GH3-like protein 12</fullName>
        <shortName>AtGH3-12</shortName>
    </alternativeName>
    <alternativeName>
        <fullName>Protein GH3-LIKE DEFENSE GENE 1</fullName>
    </alternativeName>
    <alternativeName>
        <fullName>Protein GRETCHEN HAGEN 3.12</fullName>
    </alternativeName>
    <alternativeName>
        <fullName>Protein HOPW1-1-INTERACTING 3</fullName>
    </alternativeName>
    <alternativeName>
        <fullName>Protein avrPPHB SUSCEPTIBLE 3</fullName>
    </alternativeName>
</protein>
<comment type="function">
    <text evidence="2 3 4 5 6 7 8 9">Catalyzes the conjugation of specific amino acids (e.g. Glu and possibly His, Lys, and Met) to their preferred acyl substrates (e.g. 4-substituted benzoates), in a magnesium ion- and ATP-dependent manner. Can use 4-substituted benzoates such as 4-aminobenzoate (pABA), 4-fluorobenzoate and 4-hydroxybenzoate (4-HBA), and, to a lesser extent, benzoate, vanillate and trans-cinnamate, but not 2-substituted benzoates and salicylic acid (SA), as conjugating acyl substrates. Involved in both basal and induced resistance in a SA-dependent manner. Confers resistance to virulent and avirulent pathogens (at least bacteria and oomycetes), and promotes SA glucosides accumulation. Required for the establishment of hyper-sensitive response (HR) upon incompatible interaction and subsequent systemic acquired resistance (SAR).</text>
</comment>
<comment type="activity regulation">
    <text evidence="9">Specifically and reversibly inhibited by salicylic acid (SA).</text>
</comment>
<comment type="biophysicochemical properties">
    <kinetics>
        <KM evidence="9">153 uM for 4-aminobenzoate (at pH 8.5 and 30 degrees Celsius)</KM>
        <KM evidence="9">459 uM for 4-hydroxybenzoate (at pH 8.5 and 30 degrees Celsius)</KM>
        <KM evidence="9">867 uM for benzoate (at pH 8.5 and 30 degrees Celsius)</KM>
        <KM evidence="9">636 uM for ATP (with 4-aminobenzoate as cosubstrate at pH 8.5 and 30 degrees Celsius)</KM>
        <KM evidence="9">791 uM for ATP (with 4-hydroxybenzoate as cosubstrate at pH 8.5 and 30 degrees Celsius)</KM>
    </kinetics>
    <phDependence>
        <text evidence="9">Optimum pH is 8-8.5.</text>
    </phDependence>
</comment>
<comment type="subunit">
    <text evidence="8">Interacts with the P.syringae pv. maculicola effector HopW1-1 (via C-terminus).</text>
</comment>
<comment type="tissue specificity">
    <text evidence="6">Expressed in seedlings, mostly in cotyledons, leaves, hypocotyls and sporadically in roots. Not detected in unchallenged adult plants, except in flowers.</text>
</comment>
<comment type="developmental stage">
    <text evidence="6">Observed in young plants. In flowers, first detected in flower buds at the beginning of the floral stage 13. In petals, levels fade out during flower maturation do disappear at floral opening. Present in sepals and to some extent in stamen and carpel.</text>
</comment>
<comment type="induction">
    <text evidence="5 6 7 8">By P.syringae pv. maculicola and pv. tomato. Induced by PAD4 locally at the infection site and in a salicylic acid-dependent manner systemically.</text>
</comment>
<comment type="disruption phenotype">
    <text evidence="2 5 6 7">Enhanced susceptibility to virulent and avirulent bacterial pathogens P.syringae pv. tomato and pv. maculicola ES4326 with or without DC3000(avrPphB, avrRpt2, avrB, avrRpm1, or avrRps4) as well as to the oomycete pathogen Hyaloperonospora parasitica (downy mildew) isolates Emoy2, Hind4, Hiks1, Wela3, Cand5, and Wand1. Impaired hyper-sensitive response (HR) and systemic acquired resistance (SAR). Compromised salicylic acid glucosides (SAG) accumulation. Resistance is partially rescued by SA treatment.</text>
</comment>
<comment type="similarity">
    <text evidence="11">Belongs to the IAA-amido conjugating enzyme family.</text>
</comment>
<feature type="chain" id="PRO_0000403642" description="4-substituted benzoates-glutamate ligase GH3.12">
    <location>
        <begin position="1"/>
        <end position="575"/>
    </location>
</feature>
<feature type="coiled-coil region" evidence="1">
    <location>
        <begin position="6"/>
        <end position="33"/>
    </location>
</feature>
<feature type="binding site" evidence="10 12 13 14">
    <location>
        <begin position="95"/>
        <end position="96"/>
    </location>
    <ligand>
        <name>AMP</name>
        <dbReference type="ChEBI" id="CHEBI:456215"/>
    </ligand>
</feature>
<feature type="binding site" evidence="10 13 14">
    <location>
        <begin position="120"/>
        <end position="123"/>
    </location>
    <ligand>
        <name>salicylate</name>
        <dbReference type="ChEBI" id="CHEBI:30762"/>
    </ligand>
</feature>
<feature type="binding site" evidence="10 12 13 14">
    <location>
        <position position="301"/>
    </location>
    <ligand>
        <name>AMP</name>
        <dbReference type="ChEBI" id="CHEBI:456215"/>
    </ligand>
</feature>
<feature type="binding site" evidence="10 12 13 14">
    <location>
        <position position="324"/>
    </location>
    <ligand>
        <name>AMP</name>
        <dbReference type="ChEBI" id="CHEBI:456215"/>
    </ligand>
</feature>
<feature type="binding site" evidence="10 12 13 14">
    <location>
        <position position="328"/>
    </location>
    <ligand>
        <name>AMP</name>
        <dbReference type="ChEBI" id="CHEBI:456215"/>
    </ligand>
</feature>
<feature type="binding site" evidence="10 12 13 14">
    <location>
        <position position="347"/>
    </location>
    <ligand>
        <name>AMP</name>
        <dbReference type="ChEBI" id="CHEBI:456215"/>
    </ligand>
</feature>
<feature type="binding site" evidence="10 12 13 14">
    <location>
        <position position="398"/>
    </location>
    <ligand>
        <name>AMP</name>
        <dbReference type="ChEBI" id="CHEBI:456215"/>
    </ligand>
</feature>
<feature type="binding site" evidence="10 13">
    <location>
        <position position="417"/>
    </location>
    <ligand>
        <name>AMP</name>
        <dbReference type="ChEBI" id="CHEBI:456215"/>
    </ligand>
</feature>
<feature type="mutagenesis site" description="In pbs3-1; loss of conjugating activity, and impaired resistance to virulent and avirulent pathogens; when associated with T-519." evidence="5 9">
    <original>E</original>
    <variation>K</variation>
    <location>
        <position position="502"/>
    </location>
</feature>
<feature type="mutagenesis site" description="In pbs3-1; loss of conjugating activity, and impaired resistance to virulent and avirulent pathogens; when associated with K-502." evidence="5 9">
    <original>I</original>
    <variation>T</variation>
    <location>
        <position position="519"/>
    </location>
</feature>
<feature type="helix" evidence="17">
    <location>
        <begin position="9"/>
        <end position="20"/>
    </location>
</feature>
<feature type="helix" evidence="17">
    <location>
        <begin position="22"/>
        <end position="37"/>
    </location>
</feature>
<feature type="helix" evidence="17">
    <location>
        <begin position="41"/>
        <end position="45"/>
    </location>
</feature>
<feature type="helix" evidence="17">
    <location>
        <begin position="53"/>
        <end position="59"/>
    </location>
</feature>
<feature type="helix" evidence="17">
    <location>
        <begin position="65"/>
        <end position="76"/>
    </location>
</feature>
<feature type="helix" evidence="17">
    <location>
        <begin position="81"/>
        <end position="83"/>
    </location>
</feature>
<feature type="strand" evidence="17">
    <location>
        <begin position="91"/>
        <end position="99"/>
    </location>
</feature>
<feature type="strand" evidence="17">
    <location>
        <begin position="102"/>
        <end position="108"/>
    </location>
</feature>
<feature type="helix" evidence="17">
    <location>
        <begin position="110"/>
        <end position="130"/>
    </location>
</feature>
<feature type="strand" evidence="17">
    <location>
        <begin position="137"/>
        <end position="141"/>
    </location>
</feature>
<feature type="strand" evidence="17">
    <location>
        <begin position="156"/>
        <end position="158"/>
    </location>
</feature>
<feature type="helix" evidence="17">
    <location>
        <begin position="160"/>
        <end position="165"/>
    </location>
</feature>
<feature type="helix" evidence="17">
    <location>
        <begin position="168"/>
        <end position="171"/>
    </location>
</feature>
<feature type="helix" evidence="17">
    <location>
        <begin position="177"/>
        <end position="179"/>
    </location>
</feature>
<feature type="strand" evidence="17">
    <location>
        <begin position="181"/>
        <end position="183"/>
    </location>
</feature>
<feature type="helix" evidence="17">
    <location>
        <begin position="185"/>
        <end position="189"/>
    </location>
</feature>
<feature type="helix" evidence="17">
    <location>
        <begin position="193"/>
        <end position="206"/>
    </location>
</feature>
<feature type="helix" evidence="17">
    <location>
        <begin position="208"/>
        <end position="210"/>
    </location>
</feature>
<feature type="strand" evidence="17">
    <location>
        <begin position="211"/>
        <end position="218"/>
    </location>
</feature>
<feature type="helix" evidence="17">
    <location>
        <begin position="219"/>
        <end position="242"/>
    </location>
</feature>
<feature type="helix" evidence="17">
    <location>
        <begin position="252"/>
        <end position="262"/>
    </location>
</feature>
<feature type="helix" evidence="17">
    <location>
        <begin position="267"/>
        <end position="277"/>
    </location>
</feature>
<feature type="helix" evidence="17">
    <location>
        <begin position="285"/>
        <end position="289"/>
    </location>
</feature>
<feature type="strand" evidence="17">
    <location>
        <begin position="295"/>
        <end position="299"/>
    </location>
</feature>
<feature type="helix" evidence="17">
    <location>
        <begin position="302"/>
        <end position="307"/>
    </location>
</feature>
<feature type="helix" evidence="17">
    <location>
        <begin position="308"/>
        <end position="315"/>
    </location>
</feature>
<feature type="strand" evidence="17">
    <location>
        <begin position="324"/>
        <end position="326"/>
    </location>
</feature>
<feature type="strand" evidence="17">
    <location>
        <begin position="331"/>
        <end position="334"/>
    </location>
</feature>
<feature type="helix" evidence="17">
    <location>
        <begin position="342"/>
        <end position="344"/>
    </location>
</feature>
<feature type="strand" evidence="17">
    <location>
        <begin position="347"/>
        <end position="349"/>
    </location>
</feature>
<feature type="strand" evidence="17">
    <location>
        <begin position="353"/>
        <end position="360"/>
    </location>
</feature>
<feature type="strand" evidence="16">
    <location>
        <begin position="368"/>
        <end position="371"/>
    </location>
</feature>
<feature type="helix" evidence="17">
    <location>
        <begin position="372"/>
        <end position="374"/>
    </location>
</feature>
<feature type="strand" evidence="17">
    <location>
        <begin position="380"/>
        <end position="386"/>
    </location>
</feature>
<feature type="strand" evidence="17">
    <location>
        <begin position="388"/>
        <end position="390"/>
    </location>
</feature>
<feature type="strand" evidence="17">
    <location>
        <begin position="393"/>
        <end position="395"/>
    </location>
</feature>
<feature type="strand" evidence="17">
    <location>
        <begin position="398"/>
        <end position="406"/>
    </location>
</feature>
<feature type="strand" evidence="17">
    <location>
        <begin position="409"/>
        <end position="417"/>
    </location>
</feature>
<feature type="strand" evidence="17">
    <location>
        <begin position="420"/>
        <end position="422"/>
    </location>
</feature>
<feature type="strand" evidence="17">
    <location>
        <begin position="424"/>
        <end position="426"/>
    </location>
</feature>
<feature type="helix" evidence="17">
    <location>
        <begin position="431"/>
        <end position="440"/>
    </location>
</feature>
<feature type="helix" evidence="19">
    <location>
        <begin position="442"/>
        <end position="446"/>
    </location>
</feature>
<feature type="turn" evidence="15">
    <location>
        <begin position="447"/>
        <end position="449"/>
    </location>
</feature>
<feature type="strand" evidence="17">
    <location>
        <begin position="457"/>
        <end position="460"/>
    </location>
</feature>
<feature type="strand" evidence="17">
    <location>
        <begin position="462"/>
        <end position="471"/>
    </location>
</feature>
<feature type="helix" evidence="17">
    <location>
        <begin position="491"/>
        <end position="503"/>
    </location>
</feature>
<feature type="helix" evidence="17">
    <location>
        <begin position="507"/>
        <end position="514"/>
    </location>
</feature>
<feature type="strand" evidence="17">
    <location>
        <begin position="523"/>
        <end position="525"/>
    </location>
</feature>
<feature type="turn" evidence="16">
    <location>
        <begin position="529"/>
        <end position="533"/>
    </location>
</feature>
<feature type="turn" evidence="16">
    <location>
        <begin position="536"/>
        <end position="540"/>
    </location>
</feature>
<feature type="strand" evidence="18">
    <location>
        <begin position="546"/>
        <end position="548"/>
    </location>
</feature>
<feature type="helix" evidence="16">
    <location>
        <begin position="558"/>
        <end position="565"/>
    </location>
</feature>
<feature type="strand" evidence="16">
    <location>
        <begin position="567"/>
        <end position="573"/>
    </location>
</feature>
<proteinExistence type="evidence at protein level"/>
<evidence type="ECO:0000255" key="1"/>
<evidence type="ECO:0000269" key="2">
    <source>
    </source>
</evidence>
<evidence type="ECO:0000269" key="3">
    <source>
    </source>
</evidence>
<evidence type="ECO:0000269" key="4">
    <source>
    </source>
</evidence>
<evidence type="ECO:0000269" key="5">
    <source>
    </source>
</evidence>
<evidence type="ECO:0000269" key="6">
    <source>
    </source>
</evidence>
<evidence type="ECO:0000269" key="7">
    <source>
    </source>
</evidence>
<evidence type="ECO:0000269" key="8">
    <source>
    </source>
</evidence>
<evidence type="ECO:0000269" key="9">
    <source>
    </source>
</evidence>
<evidence type="ECO:0000269" key="10">
    <source>
    </source>
</evidence>
<evidence type="ECO:0000305" key="11"/>
<evidence type="ECO:0007744" key="12">
    <source>
        <dbReference type="PDB" id="4EPM"/>
    </source>
</evidence>
<evidence type="ECO:0007744" key="13">
    <source>
        <dbReference type="PDB" id="4EQ4"/>
    </source>
</evidence>
<evidence type="ECO:0007744" key="14">
    <source>
        <dbReference type="PDB" id="4EQL"/>
    </source>
</evidence>
<evidence type="ECO:0007829" key="15">
    <source>
        <dbReference type="PDB" id="4EPM"/>
    </source>
</evidence>
<evidence type="ECO:0007829" key="16">
    <source>
        <dbReference type="PDB" id="4EQ4"/>
    </source>
</evidence>
<evidence type="ECO:0007829" key="17">
    <source>
        <dbReference type="PDB" id="4EQL"/>
    </source>
</evidence>
<evidence type="ECO:0007829" key="18">
    <source>
        <dbReference type="PDB" id="4EWV"/>
    </source>
</evidence>
<evidence type="ECO:0007829" key="19">
    <source>
        <dbReference type="PDB" id="4L39"/>
    </source>
</evidence>
<organism>
    <name type="scientific">Arabidopsis thaliana</name>
    <name type="common">Mouse-ear cress</name>
    <dbReference type="NCBI Taxonomy" id="3702"/>
    <lineage>
        <taxon>Eukaryota</taxon>
        <taxon>Viridiplantae</taxon>
        <taxon>Streptophyta</taxon>
        <taxon>Embryophyta</taxon>
        <taxon>Tracheophyta</taxon>
        <taxon>Spermatophyta</taxon>
        <taxon>Magnoliopsida</taxon>
        <taxon>eudicotyledons</taxon>
        <taxon>Gunneridae</taxon>
        <taxon>Pentapetalae</taxon>
        <taxon>rosids</taxon>
        <taxon>malvids</taxon>
        <taxon>Brassicales</taxon>
        <taxon>Brassicaceae</taxon>
        <taxon>Camelineae</taxon>
        <taxon>Arabidopsis</taxon>
    </lineage>
</organism>
<name>GH312_ARATH</name>
<accession>Q9LYU4</accession>